<sequence length="167" mass="19078">MATSELSCQVSEENQERREAFWAEWKDLTLSTRPEEGCSLHEEDTQRHETYHRQGQCQAVVQRSPWLVMRLGILGRGLQEYQLPYQRVLPLPIFTPTKVGASKEEREETPIQLRELLALETALGGQCVERQDVAEITKQLPPVVPVSKPGPLRRTLSRSMSQEAQRG</sequence>
<organism>
    <name type="scientific">Mus musculus</name>
    <name type="common">Mouse</name>
    <dbReference type="NCBI Taxonomy" id="10090"/>
    <lineage>
        <taxon>Eukaryota</taxon>
        <taxon>Metazoa</taxon>
        <taxon>Chordata</taxon>
        <taxon>Craniata</taxon>
        <taxon>Vertebrata</taxon>
        <taxon>Euteleostomi</taxon>
        <taxon>Mammalia</taxon>
        <taxon>Eutheria</taxon>
        <taxon>Euarchontoglires</taxon>
        <taxon>Glires</taxon>
        <taxon>Rodentia</taxon>
        <taxon>Myomorpha</taxon>
        <taxon>Muroidea</taxon>
        <taxon>Muridae</taxon>
        <taxon>Murinae</taxon>
        <taxon>Mus</taxon>
        <taxon>Mus</taxon>
    </lineage>
</organism>
<gene>
    <name type="primary">Tcap</name>
</gene>
<proteinExistence type="evidence at protein level"/>
<reference key="1">
    <citation type="submission" date="1998-02" db="EMBL/GenBank/DDBJ databases">
        <title>Skeletal muscle transcripts characterization in Homo sapiens and Mus musculus.</title>
        <authorList>
            <person name="Ievolella C."/>
            <person name="Formentin E."/>
            <person name="Valle G."/>
            <person name="Lanfranchi G."/>
        </authorList>
    </citation>
    <scope>NUCLEOTIDE SEQUENCE [MRNA]</scope>
    <source>
        <tissue>Diaphragm</tissue>
    </source>
</reference>
<reference key="2">
    <citation type="submission" date="1999-03" db="EMBL/GenBank/DDBJ databases">
        <title>The titin cap protein - a novel protein essential for sarcomere formation.</title>
        <authorList>
            <person name="Kolmerer B."/>
        </authorList>
    </citation>
    <scope>NUCLEOTIDE SEQUENCE [MRNA]</scope>
    <source>
        <tissue>Heart</tissue>
    </source>
</reference>
<reference key="3">
    <citation type="journal article" date="2004" name="Genome Res.">
        <title>The status, quality, and expansion of the NIH full-length cDNA project: the Mammalian Gene Collection (MGC).</title>
        <authorList>
            <consortium name="The MGC Project Team"/>
        </authorList>
    </citation>
    <scope>NUCLEOTIDE SEQUENCE [LARGE SCALE MRNA]</scope>
    <source>
        <strain>C57BL/6J</strain>
        <tissue>Mammary gland</tissue>
    </source>
</reference>
<reference key="4">
    <citation type="journal article" date="2010" name="Cell">
        <title>A tissue-specific atlas of mouse protein phosphorylation and expression.</title>
        <authorList>
            <person name="Huttlin E.L."/>
            <person name="Jedrychowski M.P."/>
            <person name="Elias J.E."/>
            <person name="Goswami T."/>
            <person name="Rad R."/>
            <person name="Beausoleil S.A."/>
            <person name="Villen J."/>
            <person name="Haas W."/>
            <person name="Sowa M.E."/>
            <person name="Gygi S.P."/>
        </authorList>
    </citation>
    <scope>PHOSPHORYLATION [LARGE SCALE ANALYSIS] AT SER-39</scope>
    <scope>IDENTIFICATION BY MASS SPECTROMETRY [LARGE SCALE ANALYSIS]</scope>
    <source>
        <tissue>Heart</tissue>
    </source>
</reference>
<feature type="chain" id="PRO_0000072484" description="Telethonin">
    <location>
        <begin position="1"/>
        <end position="167"/>
    </location>
</feature>
<feature type="region of interest" description="Disordered" evidence="2">
    <location>
        <begin position="142"/>
        <end position="167"/>
    </location>
</feature>
<feature type="compositionally biased region" description="Polar residues" evidence="2">
    <location>
        <begin position="157"/>
        <end position="167"/>
    </location>
</feature>
<feature type="modified residue" description="Phosphoserine" evidence="3">
    <location>
        <position position="39"/>
    </location>
</feature>
<protein>
    <recommendedName>
        <fullName>Telethonin</fullName>
    </recommendedName>
    <alternativeName>
        <fullName>Titin cap protein</fullName>
    </alternativeName>
</protein>
<keyword id="KW-0963">Cytoplasm</keyword>
<keyword id="KW-0597">Phosphoprotein</keyword>
<keyword id="KW-1185">Reference proteome</keyword>
<comment type="function">
    <text evidence="1">Muscle assembly regulating factor. Mediates the antiparallel assembly of titin (TTN) molecules at the sarcomeric Z-disk (By similarity).</text>
</comment>
<comment type="subunit">
    <text evidence="1">Interacts with MYOZ1, MYOZ2 and MYOZ3. Interacts with CSRP3. Interacts directly with the N-terminal Ig-like domains of 2 titin (TTN) molecules. Interacts with ANKRD2; the interaction is direct (By similarity).</text>
</comment>
<comment type="subcellular location">
    <subcellularLocation>
        <location>Cytoplasm</location>
        <location>Myofibril</location>
        <location>Sarcomere</location>
    </subcellularLocation>
</comment>
<name>TELT_MOUSE</name>
<accession>O70548</accession>
<evidence type="ECO:0000250" key="1"/>
<evidence type="ECO:0000256" key="2">
    <source>
        <dbReference type="SAM" id="MobiDB-lite"/>
    </source>
</evidence>
<evidence type="ECO:0007744" key="3">
    <source>
    </source>
</evidence>
<dbReference type="EMBL" id="AJ223854">
    <property type="protein sequence ID" value="CAA11585.1"/>
    <property type="molecule type" value="mRNA"/>
</dbReference>
<dbReference type="EMBL" id="Y15845">
    <property type="protein sequence ID" value="CAB38077.1"/>
    <property type="molecule type" value="mRNA"/>
</dbReference>
<dbReference type="EMBL" id="BC027631">
    <property type="protein sequence ID" value="AAH27631.1"/>
    <property type="molecule type" value="mRNA"/>
</dbReference>
<dbReference type="CCDS" id="CCDS25346.1"/>
<dbReference type="RefSeq" id="NP_035670.2">
    <property type="nucleotide sequence ID" value="NM_011540.2"/>
</dbReference>
<dbReference type="SMR" id="O70548"/>
<dbReference type="BioGRID" id="203994">
    <property type="interactions" value="1"/>
</dbReference>
<dbReference type="ComplexPortal" id="CPX-127">
    <property type="entry name" value="Titin-Telethonin complex"/>
</dbReference>
<dbReference type="FunCoup" id="O70548">
    <property type="interactions" value="36"/>
</dbReference>
<dbReference type="STRING" id="10090.ENSMUSP00000008021"/>
<dbReference type="iPTMnet" id="O70548"/>
<dbReference type="PhosphoSitePlus" id="O70548"/>
<dbReference type="jPOST" id="O70548"/>
<dbReference type="PaxDb" id="10090-ENSMUSP00000008021"/>
<dbReference type="ProteomicsDB" id="263033"/>
<dbReference type="Antibodypedia" id="3888">
    <property type="antibodies" value="232 antibodies from 29 providers"/>
</dbReference>
<dbReference type="DNASU" id="21393"/>
<dbReference type="Ensembl" id="ENSMUST00000008021.3">
    <property type="protein sequence ID" value="ENSMUSP00000008021.3"/>
    <property type="gene ID" value="ENSMUSG00000007877.3"/>
</dbReference>
<dbReference type="GeneID" id="21393"/>
<dbReference type="KEGG" id="mmu:21393"/>
<dbReference type="UCSC" id="uc007lgf.1">
    <property type="organism name" value="mouse"/>
</dbReference>
<dbReference type="AGR" id="MGI:1330233"/>
<dbReference type="CTD" id="8557"/>
<dbReference type="MGI" id="MGI:1330233">
    <property type="gene designation" value="Tcap"/>
</dbReference>
<dbReference type="VEuPathDB" id="HostDB:ENSMUSG00000007877"/>
<dbReference type="eggNOG" id="ENOG502S21D">
    <property type="taxonomic scope" value="Eukaryota"/>
</dbReference>
<dbReference type="GeneTree" id="ENSGT00390000012014"/>
<dbReference type="HOGENOM" id="CLU_128806_0_0_1"/>
<dbReference type="InParanoid" id="O70548"/>
<dbReference type="OMA" id="QCQAVVQ"/>
<dbReference type="OrthoDB" id="8532967at2759"/>
<dbReference type="PhylomeDB" id="O70548"/>
<dbReference type="TreeFam" id="TF333228"/>
<dbReference type="Reactome" id="R-MMU-390522">
    <property type="pathway name" value="Striated Muscle Contraction"/>
</dbReference>
<dbReference type="BioGRID-ORCS" id="21393">
    <property type="hits" value="5 hits in 77 CRISPR screens"/>
</dbReference>
<dbReference type="ChiTaRS" id="Tcap">
    <property type="organism name" value="mouse"/>
</dbReference>
<dbReference type="PRO" id="PR:O70548"/>
<dbReference type="Proteomes" id="UP000000589">
    <property type="component" value="Chromosome 11"/>
</dbReference>
<dbReference type="RNAct" id="O70548">
    <property type="molecule type" value="protein"/>
</dbReference>
<dbReference type="Bgee" id="ENSMUSG00000007877">
    <property type="expression patterns" value="Expressed in hindlimb stylopod muscle and 101 other cell types or tissues"/>
</dbReference>
<dbReference type="ExpressionAtlas" id="O70548">
    <property type="expression patterns" value="baseline and differential"/>
</dbReference>
<dbReference type="GO" id="GO:0031674">
    <property type="term" value="C:I band"/>
    <property type="evidence" value="ECO:0000314"/>
    <property type="project" value="BHF-UCL"/>
</dbReference>
<dbReference type="GO" id="GO:1990733">
    <property type="term" value="C:titin-telethonin complex"/>
    <property type="evidence" value="ECO:0007669"/>
    <property type="project" value="Ensembl"/>
</dbReference>
<dbReference type="GO" id="GO:0030018">
    <property type="term" value="C:Z disc"/>
    <property type="evidence" value="ECO:0000314"/>
    <property type="project" value="BHF-UCL"/>
</dbReference>
<dbReference type="GO" id="GO:0036122">
    <property type="term" value="F:BMP binding"/>
    <property type="evidence" value="ECO:0007669"/>
    <property type="project" value="Ensembl"/>
</dbReference>
<dbReference type="GO" id="GO:0051373">
    <property type="term" value="F:FATZ binding"/>
    <property type="evidence" value="ECO:0007669"/>
    <property type="project" value="Ensembl"/>
</dbReference>
<dbReference type="GO" id="GO:0030674">
    <property type="term" value="F:protein-macromolecule adaptor activity"/>
    <property type="evidence" value="ECO:0007669"/>
    <property type="project" value="Ensembl"/>
</dbReference>
<dbReference type="GO" id="GO:0008307">
    <property type="term" value="F:structural constituent of muscle"/>
    <property type="evidence" value="ECO:0007669"/>
    <property type="project" value="Ensembl"/>
</dbReference>
<dbReference type="GO" id="GO:0031432">
    <property type="term" value="F:titin binding"/>
    <property type="evidence" value="ECO:0007669"/>
    <property type="project" value="Ensembl"/>
</dbReference>
<dbReference type="GO" id="GO:0070080">
    <property type="term" value="F:titin Z domain binding"/>
    <property type="evidence" value="ECO:0007669"/>
    <property type="project" value="Ensembl"/>
</dbReference>
<dbReference type="GO" id="GO:0044325">
    <property type="term" value="F:transmembrane transporter binding"/>
    <property type="evidence" value="ECO:0007669"/>
    <property type="project" value="Ensembl"/>
</dbReference>
<dbReference type="GO" id="GO:0007512">
    <property type="term" value="P:adult heart development"/>
    <property type="evidence" value="ECO:0000270"/>
    <property type="project" value="BHF-UCL"/>
</dbReference>
<dbReference type="GO" id="GO:0060048">
    <property type="term" value="P:cardiac muscle contraction"/>
    <property type="evidence" value="ECO:0007669"/>
    <property type="project" value="Ensembl"/>
</dbReference>
<dbReference type="GO" id="GO:0014898">
    <property type="term" value="P:cardiac muscle hypertrophy in response to stress"/>
    <property type="evidence" value="ECO:0007669"/>
    <property type="project" value="Ensembl"/>
</dbReference>
<dbReference type="GO" id="GO:0055008">
    <property type="term" value="P:cardiac muscle tissue morphogenesis"/>
    <property type="evidence" value="ECO:0007669"/>
    <property type="project" value="Ensembl"/>
</dbReference>
<dbReference type="GO" id="GO:0055003">
    <property type="term" value="P:cardiac myofibril assembly"/>
    <property type="evidence" value="ECO:0007669"/>
    <property type="project" value="Ensembl"/>
</dbReference>
<dbReference type="GO" id="GO:0035995">
    <property type="term" value="P:detection of muscle stretch"/>
    <property type="evidence" value="ECO:0007669"/>
    <property type="project" value="Ensembl"/>
</dbReference>
<dbReference type="GO" id="GO:0030916">
    <property type="term" value="P:otic vesicle formation"/>
    <property type="evidence" value="ECO:0000270"/>
    <property type="project" value="BHF-UCL"/>
</dbReference>
<dbReference type="GO" id="GO:0045214">
    <property type="term" value="P:sarcomere organization"/>
    <property type="evidence" value="ECO:0000266"/>
    <property type="project" value="MGI"/>
</dbReference>
<dbReference type="GO" id="GO:0048769">
    <property type="term" value="P:sarcomerogenesis"/>
    <property type="evidence" value="ECO:0007669"/>
    <property type="project" value="Ensembl"/>
</dbReference>
<dbReference type="GO" id="GO:0003009">
    <property type="term" value="P:skeletal muscle contraction"/>
    <property type="evidence" value="ECO:0007669"/>
    <property type="project" value="Ensembl"/>
</dbReference>
<dbReference type="GO" id="GO:0030241">
    <property type="term" value="P:skeletal muscle myosin thick filament assembly"/>
    <property type="evidence" value="ECO:0007669"/>
    <property type="project" value="Ensembl"/>
</dbReference>
<dbReference type="GO" id="GO:0030240">
    <property type="term" value="P:skeletal muscle thin filament assembly"/>
    <property type="evidence" value="ECO:0007669"/>
    <property type="project" value="Ensembl"/>
</dbReference>
<dbReference type="GO" id="GO:0001756">
    <property type="term" value="P:somitogenesis"/>
    <property type="evidence" value="ECO:0000270"/>
    <property type="project" value="BHF-UCL"/>
</dbReference>
<dbReference type="FunFam" id="2.20.160.10:FF:000001">
    <property type="entry name" value="Titin-cap (Telethonin)"/>
    <property type="match status" value="1"/>
</dbReference>
<dbReference type="Gene3D" id="2.20.160.10">
    <property type="entry name" value="titin domain like"/>
    <property type="match status" value="1"/>
</dbReference>
<dbReference type="InterPro" id="IPR015667">
    <property type="entry name" value="Telethonin"/>
</dbReference>
<dbReference type="InterPro" id="IPR023111">
    <property type="entry name" value="Titin-like_dom_sf"/>
</dbReference>
<dbReference type="PANTHER" id="PTHR15143">
    <property type="entry name" value="TELETHONIN"/>
    <property type="match status" value="1"/>
</dbReference>
<dbReference type="PANTHER" id="PTHR15143:SF0">
    <property type="entry name" value="TELETHONIN"/>
    <property type="match status" value="1"/>
</dbReference>
<dbReference type="Pfam" id="PF09470">
    <property type="entry name" value="Telethonin"/>
    <property type="match status" value="1"/>
</dbReference>